<reference key="1">
    <citation type="journal article" date="2004" name="Mol. Genet. Genomics">
        <title>The PIN and LAX families of auxin transport genes in Medicago truncatula.</title>
        <authorList>
            <person name="Schnabel E.L."/>
            <person name="Frugoli J."/>
        </authorList>
    </citation>
    <scope>NUCLEOTIDE SEQUENCE [GENOMIC DNA]</scope>
    <scope>GENE FAMILY</scope>
    <scope>TISSUE SPECIFICITY</scope>
</reference>
<reference key="2">
    <citation type="journal article" date="2001" name="Mol. Plant Microbe Interact.">
        <title>Expression studies on AUX1-like genes in Medicago truncatula suggest that auxin is required at two steps in early nodule development.</title>
        <authorList>
            <person name="de Billy F."/>
            <person name="Grosjean C."/>
            <person name="May S."/>
            <person name="Bennett M.J."/>
            <person name="Cullimore J.V."/>
        </authorList>
    </citation>
    <scope>FUNCTION</scope>
    <scope>TISSUE SPECIFICITY</scope>
    <scope>DEVELOPMENTAL STAGE</scope>
</reference>
<feature type="chain" id="PRO_0000093849" description="Auxin transporter-like protein 5">
    <location>
        <begin position="1"/>
        <end position="490"/>
    </location>
</feature>
<feature type="topological domain" description="Cytoplasmic" evidence="2">
    <location>
        <begin position="1"/>
        <end position="55"/>
    </location>
</feature>
<feature type="transmembrane region" description="Helical" evidence="2">
    <location>
        <begin position="56"/>
        <end position="73"/>
    </location>
</feature>
<feature type="topological domain" description="Extracellular" evidence="2">
    <location>
        <begin position="74"/>
        <end position="75"/>
    </location>
</feature>
<feature type="transmembrane region" description="Helical" evidence="2">
    <location>
        <begin position="76"/>
        <end position="96"/>
    </location>
</feature>
<feature type="topological domain" description="Cytoplasmic" evidence="2">
    <location>
        <begin position="97"/>
        <end position="132"/>
    </location>
</feature>
<feature type="transmembrane region" description="Helical" evidence="2">
    <location>
        <begin position="133"/>
        <end position="153"/>
    </location>
</feature>
<feature type="topological domain" description="Extracellular" evidence="2">
    <location>
        <begin position="154"/>
        <end position="168"/>
    </location>
</feature>
<feature type="transmembrane region" description="Helical" evidence="2">
    <location>
        <begin position="169"/>
        <end position="189"/>
    </location>
</feature>
<feature type="topological domain" description="Cytoplasmic" evidence="2">
    <location>
        <position position="190"/>
    </location>
</feature>
<feature type="transmembrane region" description="Helical" evidence="2">
    <location>
        <begin position="191"/>
        <end position="211"/>
    </location>
</feature>
<feature type="topological domain" description="Extracellular" evidence="2">
    <location>
        <begin position="212"/>
        <end position="227"/>
    </location>
</feature>
<feature type="transmembrane region" description="Helical" evidence="2">
    <location>
        <begin position="228"/>
        <end position="248"/>
    </location>
</feature>
<feature type="topological domain" description="Cytoplasmic" evidence="2">
    <location>
        <begin position="249"/>
        <end position="262"/>
    </location>
</feature>
<feature type="transmembrane region" description="Helical" evidence="2">
    <location>
        <begin position="263"/>
        <end position="283"/>
    </location>
</feature>
<feature type="topological domain" description="Extracellular" evidence="2">
    <location>
        <begin position="284"/>
        <end position="310"/>
    </location>
</feature>
<feature type="transmembrane region" description="Helical" evidence="2">
    <location>
        <begin position="311"/>
        <end position="331"/>
    </location>
</feature>
<feature type="topological domain" description="Cytoplasmic" evidence="2">
    <location>
        <begin position="332"/>
        <end position="352"/>
    </location>
</feature>
<feature type="transmembrane region" description="Helical" evidence="2">
    <location>
        <begin position="353"/>
        <end position="373"/>
    </location>
</feature>
<feature type="topological domain" description="Extracellular" evidence="2">
    <location>
        <begin position="374"/>
        <end position="376"/>
    </location>
</feature>
<feature type="transmembrane region" description="Helical" evidence="2">
    <location>
        <begin position="377"/>
        <end position="397"/>
    </location>
</feature>
<feature type="topological domain" description="Cytoplasmic" evidence="2">
    <location>
        <begin position="398"/>
        <end position="420"/>
    </location>
</feature>
<feature type="transmembrane region" description="Helical" evidence="2">
    <location>
        <begin position="421"/>
        <end position="441"/>
    </location>
</feature>
<feature type="topological domain" description="Extracellular" evidence="2">
    <location>
        <begin position="442"/>
        <end position="490"/>
    </location>
</feature>
<feature type="glycosylation site" description="N-linked (GlcNAc...) asparagine" evidence="2">
    <location>
        <position position="293"/>
    </location>
</feature>
<feature type="glycosylation site" description="N-linked (GlcNAc...) asparagine" evidence="2">
    <location>
        <position position="479"/>
    </location>
</feature>
<evidence type="ECO:0000250" key="1"/>
<evidence type="ECO:0000255" key="2"/>
<evidence type="ECO:0000269" key="3">
    <source>
    </source>
</evidence>
<evidence type="ECO:0000269" key="4">
    <source>
    </source>
</evidence>
<evidence type="ECO:0000305" key="5"/>
<proteinExistence type="evidence at transcript level"/>
<gene>
    <name type="primary">LAX5</name>
</gene>
<sequence>MEMANDKVAETVIVGNYVEMESEGKPPQDIKSKLSNFLWHGGSAYDAWFSCASNQVAQVLLTLPYSFSQLGMLSGILFQLFYGILGSWTAYLISILYVEYRTRKEREKVNFRSHVIQWFEVLDGLLGKHWRNVGLGFNCTFLLFGSVIQLIACASNIYYINDNLDKRTWTYIFGACCATTVFIPSFHNYRIWSFLGLVMTTYTAWYLTIAAVLHGQVEGVKHSGPNKIILYFTGATNILYTFGGHAVTVEIMHAMWKPQKFKAIYLLATLYVLTLTIPSATAVYWAFGDMLLNHSNAFALLPKSPFRDMAVILMLIHQFITFGFACTPLYFVWEKTVGMHECKSLCKRALVRLPVVIPIWFLAIIFPFFGPINSTVGSLLVSFTVYIIPALAHIFTFKSSSARQNAVEQPPKFVGRWVGTFVINVFIVVWVLIVGFGFGGWASMVNFVHQIDTFGLFTKCYQCPPPTPSVPTMPPHQMNATAPSPHHHHH</sequence>
<accession>Q8L883</accession>
<name>LAX5_MEDTR</name>
<protein>
    <recommendedName>
        <fullName>Auxin transporter-like protein 5</fullName>
    </recommendedName>
    <alternativeName>
        <fullName>AUX1-like protein 5</fullName>
    </alternativeName>
    <alternativeName>
        <fullName>MtLAX5</fullName>
    </alternativeName>
</protein>
<organism>
    <name type="scientific">Medicago truncatula</name>
    <name type="common">Barrel medic</name>
    <name type="synonym">Medicago tribuloides</name>
    <dbReference type="NCBI Taxonomy" id="3880"/>
    <lineage>
        <taxon>Eukaryota</taxon>
        <taxon>Viridiplantae</taxon>
        <taxon>Streptophyta</taxon>
        <taxon>Embryophyta</taxon>
        <taxon>Tracheophyta</taxon>
        <taxon>Spermatophyta</taxon>
        <taxon>Magnoliopsida</taxon>
        <taxon>eudicotyledons</taxon>
        <taxon>Gunneridae</taxon>
        <taxon>Pentapetalae</taxon>
        <taxon>rosids</taxon>
        <taxon>fabids</taxon>
        <taxon>Fabales</taxon>
        <taxon>Fabaceae</taxon>
        <taxon>Papilionoideae</taxon>
        <taxon>50 kb inversion clade</taxon>
        <taxon>NPAAA clade</taxon>
        <taxon>Hologalegina</taxon>
        <taxon>IRL clade</taxon>
        <taxon>Trifolieae</taxon>
        <taxon>Medicago</taxon>
    </lineage>
</organism>
<dbReference type="EMBL" id="AY115845">
    <property type="protein sequence ID" value="AAM55306.1"/>
    <property type="molecule type" value="Genomic_DNA"/>
</dbReference>
<dbReference type="RefSeq" id="XP_013456483.1">
    <property type="nucleotide sequence ID" value="XM_013601029.1"/>
</dbReference>
<dbReference type="SMR" id="Q8L883"/>
<dbReference type="GlyCosmos" id="Q8L883">
    <property type="glycosylation" value="2 sites, No reported glycans"/>
</dbReference>
<dbReference type="EnsemblPlants" id="rna23975">
    <property type="protein sequence ID" value="RHN61502.1"/>
    <property type="gene ID" value="gene23975"/>
</dbReference>
<dbReference type="GeneID" id="25492791"/>
<dbReference type="Gramene" id="rna23975">
    <property type="protein sequence ID" value="RHN61502.1"/>
    <property type="gene ID" value="gene23975"/>
</dbReference>
<dbReference type="KEGG" id="mtr:25492791"/>
<dbReference type="HOGENOM" id="CLU_027994_2_0_1"/>
<dbReference type="OrthoDB" id="40134at2759"/>
<dbReference type="GO" id="GO:0005886">
    <property type="term" value="C:plasma membrane"/>
    <property type="evidence" value="ECO:0007669"/>
    <property type="project" value="UniProtKB-SubCell"/>
</dbReference>
<dbReference type="GO" id="GO:0015293">
    <property type="term" value="F:symporter activity"/>
    <property type="evidence" value="ECO:0007669"/>
    <property type="project" value="UniProtKB-KW"/>
</dbReference>
<dbReference type="GO" id="GO:0006865">
    <property type="term" value="P:amino acid transport"/>
    <property type="evidence" value="ECO:0007669"/>
    <property type="project" value="UniProtKB-KW"/>
</dbReference>
<dbReference type="GO" id="GO:0009734">
    <property type="term" value="P:auxin-activated signaling pathway"/>
    <property type="evidence" value="ECO:0007669"/>
    <property type="project" value="UniProtKB-KW"/>
</dbReference>
<dbReference type="InterPro" id="IPR013057">
    <property type="entry name" value="AA_transpt_TM"/>
</dbReference>
<dbReference type="PANTHER" id="PTHR48017">
    <property type="entry name" value="OS05G0424000 PROTEIN-RELATED"/>
    <property type="match status" value="1"/>
</dbReference>
<dbReference type="Pfam" id="PF01490">
    <property type="entry name" value="Aa_trans"/>
    <property type="match status" value="1"/>
</dbReference>
<comment type="function">
    <text evidence="1 3">Carrier protein involved in proton-driven auxin influx. Mediates the formation of auxin gradient from developing leaves (site of auxin biosynthesis) to tips by contributing to the loading of auxin in vascular tissues and facilitating acropetal (base to tip) auxin transport within inner tissues of the root apex, and basipetal (tip to base) auxin transport within outer tissues of the root apex (By similarity). May be involved in lateral roots and nodules formation.</text>
</comment>
<comment type="subcellular location">
    <subcellularLocation>
        <location evidence="1">Cell membrane</location>
        <topology evidence="1">Multi-pass membrane protein</topology>
    </subcellularLocation>
</comment>
<comment type="tissue specificity">
    <text evidence="3 4">Shoots and roots of nodulating plants, at low levels.</text>
</comment>
<comment type="developmental stage">
    <text evidence="3">In primary roots, mostly localized in tips and to a lower extent in vasculature of older regions. In root tips, mostly expressed in the central tissues of the elongating zone (developing vasculature), in the starch-filled cells of the root cap and in some cortical cells. During lateral root development, striking expression in the proximal region of the primordium, close to the primary root central cylinder, and then in elongating cells of the developing vasculature and in developing root cap. During nodule formation, expressed in young elongated primordium, mostly in cells close to the root vasculature. In later stages, confined in small cells rich in amyloplasts with small nuclei. Near the periphery of developing nodules strong expression at the base that tapers off toward the apex. Not expressed in mature nodules.</text>
</comment>
<comment type="similarity">
    <text evidence="5">Belongs to the amino acid/polyamine transporter 2 family. Amino acid/auxin permease (AAAP) (TC 2.A.18.1) subfamily.</text>
</comment>
<comment type="caution">
    <text evidence="5">Because of the similarity in sequence, the probe used to describe the developmental stages did not discriminate among the various MtLAX mRNAs.</text>
</comment>
<keyword id="KW-0029">Amino-acid transport</keyword>
<keyword id="KW-0927">Auxin signaling pathway</keyword>
<keyword id="KW-1003">Cell membrane</keyword>
<keyword id="KW-0325">Glycoprotein</keyword>
<keyword id="KW-0472">Membrane</keyword>
<keyword id="KW-0769">Symport</keyword>
<keyword id="KW-0812">Transmembrane</keyword>
<keyword id="KW-1133">Transmembrane helix</keyword>
<keyword id="KW-0813">Transport</keyword>